<comment type="function">
    <text evidence="1">Catalyzes a reversible aldol reaction between acetaldehyde and D-glyceraldehyde 3-phosphate to generate 2-deoxy-D-ribose 5-phosphate.</text>
</comment>
<comment type="catalytic activity">
    <reaction evidence="1">
        <text>2-deoxy-D-ribose 5-phosphate = D-glyceraldehyde 3-phosphate + acetaldehyde</text>
        <dbReference type="Rhea" id="RHEA:12821"/>
        <dbReference type="ChEBI" id="CHEBI:15343"/>
        <dbReference type="ChEBI" id="CHEBI:59776"/>
        <dbReference type="ChEBI" id="CHEBI:62877"/>
        <dbReference type="EC" id="4.1.2.4"/>
    </reaction>
</comment>
<comment type="pathway">
    <text evidence="1">Carbohydrate degradation; 2-deoxy-D-ribose 1-phosphate degradation; D-glyceraldehyde 3-phosphate and acetaldehyde from 2-deoxy-alpha-D-ribose 1-phosphate: step 2/2.</text>
</comment>
<comment type="subcellular location">
    <subcellularLocation>
        <location evidence="1">Cytoplasm</location>
    </subcellularLocation>
</comment>
<comment type="similarity">
    <text evidence="1">Belongs to the DeoC/FbaB aldolase family. DeoC type 1 subfamily.</text>
</comment>
<proteinExistence type="inferred from homology"/>
<name>DEOC_GEOSW</name>
<evidence type="ECO:0000255" key="1">
    <source>
        <dbReference type="HAMAP-Rule" id="MF_00114"/>
    </source>
</evidence>
<reference key="1">
    <citation type="submission" date="2009-06" db="EMBL/GenBank/DDBJ databases">
        <title>Complete sequence of chromosome of Geopacillus sp. WCH70.</title>
        <authorList>
            <consortium name="US DOE Joint Genome Institute"/>
            <person name="Lucas S."/>
            <person name="Copeland A."/>
            <person name="Lapidus A."/>
            <person name="Glavina del Rio T."/>
            <person name="Dalin E."/>
            <person name="Tice H."/>
            <person name="Bruce D."/>
            <person name="Goodwin L."/>
            <person name="Pitluck S."/>
            <person name="Chertkov O."/>
            <person name="Brettin T."/>
            <person name="Detter J.C."/>
            <person name="Han C."/>
            <person name="Larimer F."/>
            <person name="Land M."/>
            <person name="Hauser L."/>
            <person name="Kyrpides N."/>
            <person name="Mikhailova N."/>
            <person name="Brumm P."/>
            <person name="Mead D.A."/>
            <person name="Richardson P."/>
        </authorList>
    </citation>
    <scope>NUCLEOTIDE SEQUENCE [LARGE SCALE GENOMIC DNA]</scope>
    <source>
        <strain>WCH70</strain>
    </source>
</reference>
<organism>
    <name type="scientific">Geobacillus sp. (strain WCH70)</name>
    <dbReference type="NCBI Taxonomy" id="471223"/>
    <lineage>
        <taxon>Bacteria</taxon>
        <taxon>Bacillati</taxon>
        <taxon>Bacillota</taxon>
        <taxon>Bacilli</taxon>
        <taxon>Bacillales</taxon>
        <taxon>Anoxybacillaceae</taxon>
        <taxon>Geobacillus</taxon>
    </lineage>
</organism>
<keyword id="KW-0963">Cytoplasm</keyword>
<keyword id="KW-0456">Lyase</keyword>
<keyword id="KW-0704">Schiff base</keyword>
<accession>C5D4T6</accession>
<protein>
    <recommendedName>
        <fullName evidence="1">Deoxyribose-phosphate aldolase</fullName>
        <shortName evidence="1">DERA</shortName>
        <ecNumber evidence="1">4.1.2.4</ecNumber>
    </recommendedName>
    <alternativeName>
        <fullName evidence="1">2-deoxy-D-ribose 5-phosphate aldolase</fullName>
    </alternativeName>
    <alternativeName>
        <fullName evidence="1">Phosphodeoxyriboaldolase</fullName>
        <shortName evidence="1">Deoxyriboaldolase</shortName>
    </alternativeName>
</protein>
<sequence>MENNIAKMIDHTLLKADATKAQIVKLCEEAKQYGFASVCVNPTWVATAAELLKGTDVKVCTVIGFPLGANTPETKAFETKNAIENGAAEVDMVINVGALKDGNDDLVERDIRAVVDVAKGKALVKVIIEACLLTEEEKVRACQLAVKAGADYVKTSTGFSTGGATPEDVALMRKTVGPNIGVKASGGVRDMQSAEAMIQAGATRIGTSSGVSIVEGKTANSNY</sequence>
<gene>
    <name evidence="1" type="primary">deoC</name>
    <name type="ordered locus">GWCH70_2432</name>
</gene>
<dbReference type="EC" id="4.1.2.4" evidence="1"/>
<dbReference type="EMBL" id="CP001638">
    <property type="protein sequence ID" value="ACS25128.1"/>
    <property type="molecule type" value="Genomic_DNA"/>
</dbReference>
<dbReference type="SMR" id="C5D4T6"/>
<dbReference type="STRING" id="471223.GWCH70_2432"/>
<dbReference type="KEGG" id="gwc:GWCH70_2432"/>
<dbReference type="eggNOG" id="COG0274">
    <property type="taxonomic scope" value="Bacteria"/>
</dbReference>
<dbReference type="HOGENOM" id="CLU_053595_0_2_9"/>
<dbReference type="OrthoDB" id="9778711at2"/>
<dbReference type="UniPathway" id="UPA00002">
    <property type="reaction ID" value="UER00468"/>
</dbReference>
<dbReference type="GO" id="GO:0005737">
    <property type="term" value="C:cytoplasm"/>
    <property type="evidence" value="ECO:0007669"/>
    <property type="project" value="UniProtKB-SubCell"/>
</dbReference>
<dbReference type="GO" id="GO:0004139">
    <property type="term" value="F:deoxyribose-phosphate aldolase activity"/>
    <property type="evidence" value="ECO:0007669"/>
    <property type="project" value="UniProtKB-UniRule"/>
</dbReference>
<dbReference type="GO" id="GO:0006018">
    <property type="term" value="P:2-deoxyribose 1-phosphate catabolic process"/>
    <property type="evidence" value="ECO:0007669"/>
    <property type="project" value="UniProtKB-UniRule"/>
</dbReference>
<dbReference type="GO" id="GO:0016052">
    <property type="term" value="P:carbohydrate catabolic process"/>
    <property type="evidence" value="ECO:0007669"/>
    <property type="project" value="TreeGrafter"/>
</dbReference>
<dbReference type="GO" id="GO:0009264">
    <property type="term" value="P:deoxyribonucleotide catabolic process"/>
    <property type="evidence" value="ECO:0007669"/>
    <property type="project" value="InterPro"/>
</dbReference>
<dbReference type="CDD" id="cd00959">
    <property type="entry name" value="DeoC"/>
    <property type="match status" value="1"/>
</dbReference>
<dbReference type="FunFam" id="3.20.20.70:FF:000044">
    <property type="entry name" value="Deoxyribose-phosphate aldolase"/>
    <property type="match status" value="1"/>
</dbReference>
<dbReference type="Gene3D" id="3.20.20.70">
    <property type="entry name" value="Aldolase class I"/>
    <property type="match status" value="1"/>
</dbReference>
<dbReference type="HAMAP" id="MF_00114">
    <property type="entry name" value="DeoC_type1"/>
    <property type="match status" value="1"/>
</dbReference>
<dbReference type="InterPro" id="IPR013785">
    <property type="entry name" value="Aldolase_TIM"/>
</dbReference>
<dbReference type="InterPro" id="IPR011343">
    <property type="entry name" value="DeoC"/>
</dbReference>
<dbReference type="InterPro" id="IPR002915">
    <property type="entry name" value="DeoC/FbaB/LacD_aldolase"/>
</dbReference>
<dbReference type="InterPro" id="IPR028581">
    <property type="entry name" value="DeoC_typeI"/>
</dbReference>
<dbReference type="NCBIfam" id="TIGR00126">
    <property type="entry name" value="deoC"/>
    <property type="match status" value="1"/>
</dbReference>
<dbReference type="PANTHER" id="PTHR10889">
    <property type="entry name" value="DEOXYRIBOSE-PHOSPHATE ALDOLASE"/>
    <property type="match status" value="1"/>
</dbReference>
<dbReference type="PANTHER" id="PTHR10889:SF1">
    <property type="entry name" value="DEOXYRIBOSE-PHOSPHATE ALDOLASE"/>
    <property type="match status" value="1"/>
</dbReference>
<dbReference type="Pfam" id="PF01791">
    <property type="entry name" value="DeoC"/>
    <property type="match status" value="1"/>
</dbReference>
<dbReference type="PIRSF" id="PIRSF001357">
    <property type="entry name" value="DeoC"/>
    <property type="match status" value="1"/>
</dbReference>
<dbReference type="SMART" id="SM01133">
    <property type="entry name" value="DeoC"/>
    <property type="match status" value="1"/>
</dbReference>
<dbReference type="SUPFAM" id="SSF51569">
    <property type="entry name" value="Aldolase"/>
    <property type="match status" value="1"/>
</dbReference>
<feature type="chain" id="PRO_1000202966" description="Deoxyribose-phosphate aldolase">
    <location>
        <begin position="1"/>
        <end position="223"/>
    </location>
</feature>
<feature type="active site" description="Proton donor/acceptor" evidence="1">
    <location>
        <position position="91"/>
    </location>
</feature>
<feature type="active site" description="Schiff-base intermediate with acetaldehyde" evidence="1">
    <location>
        <position position="154"/>
    </location>
</feature>
<feature type="active site" description="Proton donor/acceptor" evidence="1">
    <location>
        <position position="183"/>
    </location>
</feature>